<organism>
    <name type="scientific">Burkholderia cenocepacia (strain ATCC BAA-245 / DSM 16553 / LMG 16656 / NCTC 13227 / J2315 / CF5610)</name>
    <name type="common">Burkholderia cepacia (strain J2315)</name>
    <dbReference type="NCBI Taxonomy" id="216591"/>
    <lineage>
        <taxon>Bacteria</taxon>
        <taxon>Pseudomonadati</taxon>
        <taxon>Pseudomonadota</taxon>
        <taxon>Betaproteobacteria</taxon>
        <taxon>Burkholderiales</taxon>
        <taxon>Burkholderiaceae</taxon>
        <taxon>Burkholderia</taxon>
        <taxon>Burkholderia cepacia complex</taxon>
    </lineage>
</organism>
<feature type="chain" id="PRO_1000098809" description="Protease HtpX homolog">
    <location>
        <begin position="1"/>
        <end position="285"/>
    </location>
</feature>
<feature type="transmembrane region" description="Helical" evidence="1">
    <location>
        <begin position="7"/>
        <end position="27"/>
    </location>
</feature>
<feature type="transmembrane region" description="Helical" evidence="1">
    <location>
        <begin position="30"/>
        <end position="50"/>
    </location>
</feature>
<feature type="transmembrane region" description="Helical" evidence="1">
    <location>
        <begin position="146"/>
        <end position="166"/>
    </location>
</feature>
<feature type="transmembrane region" description="Helical" evidence="1">
    <location>
        <begin position="177"/>
        <end position="197"/>
    </location>
</feature>
<feature type="active site" evidence="1">
    <location>
        <position position="132"/>
    </location>
</feature>
<feature type="binding site" evidence="1">
    <location>
        <position position="131"/>
    </location>
    <ligand>
        <name>Zn(2+)</name>
        <dbReference type="ChEBI" id="CHEBI:29105"/>
        <note>catalytic</note>
    </ligand>
</feature>
<feature type="binding site" evidence="1">
    <location>
        <position position="135"/>
    </location>
    <ligand>
        <name>Zn(2+)</name>
        <dbReference type="ChEBI" id="CHEBI:29105"/>
        <note>catalytic</note>
    </ligand>
</feature>
<feature type="binding site" evidence="1">
    <location>
        <position position="202"/>
    </location>
    <ligand>
        <name>Zn(2+)</name>
        <dbReference type="ChEBI" id="CHEBI:29105"/>
        <note>catalytic</note>
    </ligand>
</feature>
<comment type="cofactor">
    <cofactor evidence="1">
        <name>Zn(2+)</name>
        <dbReference type="ChEBI" id="CHEBI:29105"/>
    </cofactor>
    <text evidence="1">Binds 1 zinc ion per subunit.</text>
</comment>
<comment type="subcellular location">
    <subcellularLocation>
        <location evidence="1">Cell inner membrane</location>
        <topology evidence="1">Multi-pass membrane protein</topology>
    </subcellularLocation>
</comment>
<comment type="similarity">
    <text evidence="1">Belongs to the peptidase M48B family.</text>
</comment>
<reference key="1">
    <citation type="journal article" date="2009" name="J. Bacteriol.">
        <title>The genome of Burkholderia cenocepacia J2315, an epidemic pathogen of cystic fibrosis patients.</title>
        <authorList>
            <person name="Holden M.T."/>
            <person name="Seth-Smith H.M."/>
            <person name="Crossman L.C."/>
            <person name="Sebaihia M."/>
            <person name="Bentley S.D."/>
            <person name="Cerdeno-Tarraga A.M."/>
            <person name="Thomson N.R."/>
            <person name="Bason N."/>
            <person name="Quail M.A."/>
            <person name="Sharp S."/>
            <person name="Cherevach I."/>
            <person name="Churcher C."/>
            <person name="Goodhead I."/>
            <person name="Hauser H."/>
            <person name="Holroyd N."/>
            <person name="Mungall K."/>
            <person name="Scott P."/>
            <person name="Walker D."/>
            <person name="White B."/>
            <person name="Rose H."/>
            <person name="Iversen P."/>
            <person name="Mil-Homens D."/>
            <person name="Rocha E.P."/>
            <person name="Fialho A.M."/>
            <person name="Baldwin A."/>
            <person name="Dowson C."/>
            <person name="Barrell B.G."/>
            <person name="Govan J.R."/>
            <person name="Vandamme P."/>
            <person name="Hart C.A."/>
            <person name="Mahenthiralingam E."/>
            <person name="Parkhill J."/>
        </authorList>
    </citation>
    <scope>NUCLEOTIDE SEQUENCE [LARGE SCALE GENOMIC DNA]</scope>
    <source>
        <strain>ATCC BAA-245 / DSM 16553 / LMG 16656 / NCTC 13227 / J2315 / CF5610</strain>
    </source>
</reference>
<proteinExistence type="inferred from homology"/>
<evidence type="ECO:0000255" key="1">
    <source>
        <dbReference type="HAMAP-Rule" id="MF_00188"/>
    </source>
</evidence>
<keyword id="KW-0997">Cell inner membrane</keyword>
<keyword id="KW-1003">Cell membrane</keyword>
<keyword id="KW-0378">Hydrolase</keyword>
<keyword id="KW-0472">Membrane</keyword>
<keyword id="KW-0479">Metal-binding</keyword>
<keyword id="KW-0482">Metalloprotease</keyword>
<keyword id="KW-0645">Protease</keyword>
<keyword id="KW-0812">Transmembrane</keyword>
<keyword id="KW-1133">Transmembrane helix</keyword>
<keyword id="KW-0862">Zinc</keyword>
<name>HTPX_BURCJ</name>
<dbReference type="EC" id="3.4.24.-" evidence="1"/>
<dbReference type="EMBL" id="AM747720">
    <property type="protein sequence ID" value="CAR50779.1"/>
    <property type="molecule type" value="Genomic_DNA"/>
</dbReference>
<dbReference type="RefSeq" id="WP_006485774.1">
    <property type="nucleotide sequence ID" value="NC_011000.1"/>
</dbReference>
<dbReference type="GeneID" id="98107816"/>
<dbReference type="KEGG" id="bcj:BCAL0468"/>
<dbReference type="eggNOG" id="COG0501">
    <property type="taxonomic scope" value="Bacteria"/>
</dbReference>
<dbReference type="HOGENOM" id="CLU_042266_3_0_4"/>
<dbReference type="BioCyc" id="BCEN216591:G1G1V-535-MONOMER"/>
<dbReference type="Proteomes" id="UP000001035">
    <property type="component" value="Chromosome 1"/>
</dbReference>
<dbReference type="GO" id="GO:0005886">
    <property type="term" value="C:plasma membrane"/>
    <property type="evidence" value="ECO:0007669"/>
    <property type="project" value="UniProtKB-SubCell"/>
</dbReference>
<dbReference type="GO" id="GO:0004222">
    <property type="term" value="F:metalloendopeptidase activity"/>
    <property type="evidence" value="ECO:0007669"/>
    <property type="project" value="UniProtKB-UniRule"/>
</dbReference>
<dbReference type="GO" id="GO:0008270">
    <property type="term" value="F:zinc ion binding"/>
    <property type="evidence" value="ECO:0007669"/>
    <property type="project" value="UniProtKB-UniRule"/>
</dbReference>
<dbReference type="GO" id="GO:0006508">
    <property type="term" value="P:proteolysis"/>
    <property type="evidence" value="ECO:0007669"/>
    <property type="project" value="UniProtKB-KW"/>
</dbReference>
<dbReference type="CDD" id="cd07336">
    <property type="entry name" value="M48B_HtpX_like"/>
    <property type="match status" value="1"/>
</dbReference>
<dbReference type="Gene3D" id="3.30.2010.10">
    <property type="entry name" value="Metalloproteases ('zincins'), catalytic domain"/>
    <property type="match status" value="1"/>
</dbReference>
<dbReference type="HAMAP" id="MF_00188">
    <property type="entry name" value="Pept_M48_protease_HtpX"/>
    <property type="match status" value="1"/>
</dbReference>
<dbReference type="InterPro" id="IPR050083">
    <property type="entry name" value="HtpX_protease"/>
</dbReference>
<dbReference type="InterPro" id="IPR022919">
    <property type="entry name" value="Pept_M48_protease_HtpX"/>
</dbReference>
<dbReference type="InterPro" id="IPR001915">
    <property type="entry name" value="Peptidase_M48"/>
</dbReference>
<dbReference type="NCBIfam" id="NF002363">
    <property type="entry name" value="PRK01345.1"/>
    <property type="match status" value="1"/>
</dbReference>
<dbReference type="NCBIfam" id="NF002826">
    <property type="entry name" value="PRK03001.1"/>
    <property type="match status" value="1"/>
</dbReference>
<dbReference type="PANTHER" id="PTHR43221">
    <property type="entry name" value="PROTEASE HTPX"/>
    <property type="match status" value="1"/>
</dbReference>
<dbReference type="PANTHER" id="PTHR43221:SF1">
    <property type="entry name" value="PROTEASE HTPX"/>
    <property type="match status" value="1"/>
</dbReference>
<dbReference type="Pfam" id="PF01435">
    <property type="entry name" value="Peptidase_M48"/>
    <property type="match status" value="1"/>
</dbReference>
<accession>B4E7W0</accession>
<gene>
    <name evidence="1" type="primary">htpX</name>
    <name type="ordered locus">BceJ2315_04660</name>
    <name type="ORF">BCAL0468</name>
</gene>
<sequence length="285" mass="30953">MFNWVKTAMLMAAITALFIVIGGMIGGSRGMTIALLFALGMNFFSYWFSDKMVLRMYNAQEVDENTAPQFYRMVRELATRANLPMPRVYLINEDAPNAFATGRNPEHAAVAATTGILRVLSEREMRGVMAHELAHVKHRDILISTITATMAGAISALANFAMFFGGRDENGRPANPIAGIAVALLAPIAGALIQMAISRAREFEADRGGAQISGDPQSLATALDKIHRYAAGIPFQAAEAHPATAQMMIMNPLHGGGLQNLFSTHPATEERIARLMEMARTGRFD</sequence>
<protein>
    <recommendedName>
        <fullName evidence="1">Protease HtpX homolog</fullName>
        <ecNumber evidence="1">3.4.24.-</ecNumber>
    </recommendedName>
</protein>